<dbReference type="EC" id="4.2.1.17" evidence="1"/>
<dbReference type="EC" id="5.1.2.3" evidence="1"/>
<dbReference type="EC" id="1.1.1.35" evidence="1"/>
<dbReference type="EMBL" id="FM200053">
    <property type="protein sequence ID" value="CAR58569.1"/>
    <property type="molecule type" value="Genomic_DNA"/>
</dbReference>
<dbReference type="RefSeq" id="WP_000214131.1">
    <property type="nucleotide sequence ID" value="NC_011147.1"/>
</dbReference>
<dbReference type="SMR" id="B5BBA1"/>
<dbReference type="KEGG" id="sek:SSPA0440"/>
<dbReference type="HOGENOM" id="CLU_009834_16_3_6"/>
<dbReference type="UniPathway" id="UPA00659"/>
<dbReference type="Proteomes" id="UP000001869">
    <property type="component" value="Chromosome"/>
</dbReference>
<dbReference type="GO" id="GO:0005737">
    <property type="term" value="C:cytoplasm"/>
    <property type="evidence" value="ECO:0007669"/>
    <property type="project" value="UniProtKB-SubCell"/>
</dbReference>
<dbReference type="GO" id="GO:0008692">
    <property type="term" value="F:3-hydroxybutyryl-CoA epimerase activity"/>
    <property type="evidence" value="ECO:0007669"/>
    <property type="project" value="UniProtKB-UniRule"/>
</dbReference>
<dbReference type="GO" id="GO:0004300">
    <property type="term" value="F:enoyl-CoA hydratase activity"/>
    <property type="evidence" value="ECO:0007669"/>
    <property type="project" value="UniProtKB-UniRule"/>
</dbReference>
<dbReference type="GO" id="GO:0016509">
    <property type="term" value="F:long-chain-3-hydroxyacyl-CoA dehydrogenase activity"/>
    <property type="evidence" value="ECO:0007669"/>
    <property type="project" value="TreeGrafter"/>
</dbReference>
<dbReference type="GO" id="GO:0070403">
    <property type="term" value="F:NAD+ binding"/>
    <property type="evidence" value="ECO:0007669"/>
    <property type="project" value="InterPro"/>
</dbReference>
<dbReference type="GO" id="GO:0006635">
    <property type="term" value="P:fatty acid beta-oxidation"/>
    <property type="evidence" value="ECO:0007669"/>
    <property type="project" value="UniProtKB-UniRule"/>
</dbReference>
<dbReference type="CDD" id="cd06558">
    <property type="entry name" value="crotonase-like"/>
    <property type="match status" value="1"/>
</dbReference>
<dbReference type="FunFam" id="1.10.1040.50:FF:000003">
    <property type="entry name" value="Fatty acid oxidation complex subunit alpha"/>
    <property type="match status" value="1"/>
</dbReference>
<dbReference type="FunFam" id="3.90.226.10:FF:000011">
    <property type="entry name" value="Fatty acid oxidation complex subunit alpha"/>
    <property type="match status" value="1"/>
</dbReference>
<dbReference type="FunFam" id="3.40.50.720:FF:000009">
    <property type="entry name" value="Fatty oxidation complex, alpha subunit"/>
    <property type="match status" value="1"/>
</dbReference>
<dbReference type="Gene3D" id="1.10.1040.50">
    <property type="match status" value="1"/>
</dbReference>
<dbReference type="Gene3D" id="3.90.226.10">
    <property type="entry name" value="2-enoyl-CoA Hydratase, Chain A, domain 1"/>
    <property type="match status" value="1"/>
</dbReference>
<dbReference type="Gene3D" id="3.40.50.720">
    <property type="entry name" value="NAD(P)-binding Rossmann-like Domain"/>
    <property type="match status" value="1"/>
</dbReference>
<dbReference type="HAMAP" id="MF_01617">
    <property type="entry name" value="FadJ"/>
    <property type="match status" value="1"/>
</dbReference>
<dbReference type="InterPro" id="IPR006180">
    <property type="entry name" value="3-OHacyl-CoA_DH_CS"/>
</dbReference>
<dbReference type="InterPro" id="IPR006176">
    <property type="entry name" value="3-OHacyl-CoA_DH_NAD-bd"/>
</dbReference>
<dbReference type="InterPro" id="IPR006108">
    <property type="entry name" value="3HC_DH_C"/>
</dbReference>
<dbReference type="InterPro" id="IPR008927">
    <property type="entry name" value="6-PGluconate_DH-like_C_sf"/>
</dbReference>
<dbReference type="InterPro" id="IPR029045">
    <property type="entry name" value="ClpP/crotonase-like_dom_sf"/>
</dbReference>
<dbReference type="InterPro" id="IPR001753">
    <property type="entry name" value="Enoyl-CoA_hydra/iso"/>
</dbReference>
<dbReference type="InterPro" id="IPR050136">
    <property type="entry name" value="FA_oxidation_alpha_subunit"/>
</dbReference>
<dbReference type="InterPro" id="IPR012802">
    <property type="entry name" value="FadJ"/>
</dbReference>
<dbReference type="InterPro" id="IPR036291">
    <property type="entry name" value="NAD(P)-bd_dom_sf"/>
</dbReference>
<dbReference type="NCBIfam" id="TIGR02440">
    <property type="entry name" value="FadJ"/>
    <property type="match status" value="1"/>
</dbReference>
<dbReference type="NCBIfam" id="NF008363">
    <property type="entry name" value="PRK11154.1"/>
    <property type="match status" value="1"/>
</dbReference>
<dbReference type="PANTHER" id="PTHR43612">
    <property type="entry name" value="TRIFUNCTIONAL ENZYME SUBUNIT ALPHA"/>
    <property type="match status" value="1"/>
</dbReference>
<dbReference type="PANTHER" id="PTHR43612:SF3">
    <property type="entry name" value="TRIFUNCTIONAL ENZYME SUBUNIT ALPHA, MITOCHONDRIAL"/>
    <property type="match status" value="1"/>
</dbReference>
<dbReference type="Pfam" id="PF00725">
    <property type="entry name" value="3HCDH"/>
    <property type="match status" value="1"/>
</dbReference>
<dbReference type="Pfam" id="PF02737">
    <property type="entry name" value="3HCDH_N"/>
    <property type="match status" value="1"/>
</dbReference>
<dbReference type="Pfam" id="PF00378">
    <property type="entry name" value="ECH_1"/>
    <property type="match status" value="1"/>
</dbReference>
<dbReference type="SUPFAM" id="SSF48179">
    <property type="entry name" value="6-phosphogluconate dehydrogenase C-terminal domain-like"/>
    <property type="match status" value="2"/>
</dbReference>
<dbReference type="SUPFAM" id="SSF52096">
    <property type="entry name" value="ClpP/crotonase"/>
    <property type="match status" value="1"/>
</dbReference>
<dbReference type="SUPFAM" id="SSF51735">
    <property type="entry name" value="NAD(P)-binding Rossmann-fold domains"/>
    <property type="match status" value="1"/>
</dbReference>
<dbReference type="PROSITE" id="PS00067">
    <property type="entry name" value="3HCDH"/>
    <property type="match status" value="1"/>
</dbReference>
<keyword id="KW-0963">Cytoplasm</keyword>
<keyword id="KW-0276">Fatty acid metabolism</keyword>
<keyword id="KW-0413">Isomerase</keyword>
<keyword id="KW-0442">Lipid degradation</keyword>
<keyword id="KW-0443">Lipid metabolism</keyword>
<keyword id="KW-0456">Lyase</keyword>
<keyword id="KW-0511">Multifunctional enzyme</keyword>
<keyword id="KW-0520">NAD</keyword>
<keyword id="KW-0560">Oxidoreductase</keyword>
<proteinExistence type="inferred from homology"/>
<evidence type="ECO:0000255" key="1">
    <source>
        <dbReference type="HAMAP-Rule" id="MF_01617"/>
    </source>
</evidence>
<accession>B5BBA1</accession>
<organism>
    <name type="scientific">Salmonella paratyphi A (strain AKU_12601)</name>
    <dbReference type="NCBI Taxonomy" id="554290"/>
    <lineage>
        <taxon>Bacteria</taxon>
        <taxon>Pseudomonadati</taxon>
        <taxon>Pseudomonadota</taxon>
        <taxon>Gammaproteobacteria</taxon>
        <taxon>Enterobacterales</taxon>
        <taxon>Enterobacteriaceae</taxon>
        <taxon>Salmonella</taxon>
    </lineage>
</organism>
<protein>
    <recommendedName>
        <fullName evidence="1">Fatty acid oxidation complex subunit alpha</fullName>
    </recommendedName>
    <domain>
        <recommendedName>
            <fullName evidence="1">Enoyl-CoA hydratase/3-hydroxybutyryl-CoA epimerase</fullName>
            <ecNumber evidence="1">4.2.1.17</ecNumber>
            <ecNumber evidence="1">5.1.2.3</ecNumber>
        </recommendedName>
    </domain>
    <domain>
        <recommendedName>
            <fullName evidence="1">3-hydroxyacyl-CoA dehydrogenase</fullName>
            <ecNumber evidence="1">1.1.1.35</ecNumber>
        </recommendedName>
    </domain>
</protein>
<sequence length="715" mass="77235">MTTTSAFMLNVRLDNVAVVAIDVPGEKVNTLKAEFAAQVRAILKQIRENKALQGVVFISAKADNFIAGADINIIGHCQNAQEAETLARQGQQLMAEIQALPVPVIAAIHGACLGGGLEMALACHRRICTDDVKTVLGLPEVQLGLLPGSGGTQRLPRLVGVSTALDMILIGKQLRARQALKAGLVDDVVPQTILLEAAVELAKKERLAQRTLPVRERILAGPLGRALLFRLVRKKTAQKTQGNYPATERIIDVIETGLAQGSSSGYDAEARAFGELAMTPQSQALRAVFFASTEVKKDPGSDAPPGPLNSVGILGGGLMGGGIAWVTACKGGLPVRIKDINTQGINHALKYSWDLLETKVRRRHIKASERDKQLALISGSTDYRGFSHRDLVIEAVFEDLPLKQQMVAEVEQNCATHTIFASNTSSLPIGDIAANAARPEQVIGLHFFSPVEKMPLVEVIPHASTSAQTIATTVKLAKKQGKTPIVVSDKAGFYVNRILAPYINEAIRMLTEGERVEHIDAALVKFGFPVGPIQLLDEVGIDTGTKIIPVLEAAYGERFSAPANVVASILNDDRKGRKNGRGFYLYGEKGRKSKKQVDPAIYKLIGVQGQSRLSAQQVAERCVMLMLNEAARCFDEKVIRSARDGDIGAVFGIGFPPFLGGPFRYMDALGPGEMVATLQRLAALYGPRYAPCEQLVRMAERREHFWTNGETDQGN</sequence>
<gene>
    <name evidence="1" type="primary">fadJ</name>
    <name type="ordered locus">SSPA0440</name>
</gene>
<name>FADJ_SALPK</name>
<reference key="1">
    <citation type="journal article" date="2009" name="BMC Genomics">
        <title>Pseudogene accumulation in the evolutionary histories of Salmonella enterica serovars Paratyphi A and Typhi.</title>
        <authorList>
            <person name="Holt K.E."/>
            <person name="Thomson N.R."/>
            <person name="Wain J."/>
            <person name="Langridge G.C."/>
            <person name="Hasan R."/>
            <person name="Bhutta Z.A."/>
            <person name="Quail M.A."/>
            <person name="Norbertczak H."/>
            <person name="Walker D."/>
            <person name="Simmonds M."/>
            <person name="White B."/>
            <person name="Bason N."/>
            <person name="Mungall K."/>
            <person name="Dougan G."/>
            <person name="Parkhill J."/>
        </authorList>
    </citation>
    <scope>NUCLEOTIDE SEQUENCE [LARGE SCALE GENOMIC DNA]</scope>
    <source>
        <strain>AKU_12601</strain>
    </source>
</reference>
<feature type="chain" id="PRO_1000185953" description="Fatty acid oxidation complex subunit alpha">
    <location>
        <begin position="1"/>
        <end position="715"/>
    </location>
</feature>
<feature type="region of interest" description="Enoyl-CoA hydratase" evidence="1">
    <location>
        <begin position="1"/>
        <end position="190"/>
    </location>
</feature>
<feature type="region of interest" description="3-hydroxyacyl-CoA dehydrogenase" evidence="1">
    <location>
        <begin position="306"/>
        <end position="715"/>
    </location>
</feature>
<feature type="site" description="Important for catalytic activity" evidence="1">
    <location>
        <position position="118"/>
    </location>
</feature>
<feature type="site" description="Important for catalytic activity" evidence="1">
    <location>
        <position position="140"/>
    </location>
</feature>
<comment type="function">
    <text evidence="1">Catalyzes the formation of a hydroxyacyl-CoA by addition of water on enoyl-CoA. Also exhibits 3-hydroxyacyl-CoA epimerase and 3-hydroxyacyl-CoA dehydrogenase activities.</text>
</comment>
<comment type="catalytic activity">
    <reaction evidence="1">
        <text>a (3S)-3-hydroxyacyl-CoA = a (2E)-enoyl-CoA + H2O</text>
        <dbReference type="Rhea" id="RHEA:16105"/>
        <dbReference type="ChEBI" id="CHEBI:15377"/>
        <dbReference type="ChEBI" id="CHEBI:57318"/>
        <dbReference type="ChEBI" id="CHEBI:58856"/>
        <dbReference type="EC" id="4.2.1.17"/>
    </reaction>
</comment>
<comment type="catalytic activity">
    <reaction evidence="1">
        <text>a 4-saturated-(3S)-3-hydroxyacyl-CoA = a (3E)-enoyl-CoA + H2O</text>
        <dbReference type="Rhea" id="RHEA:20724"/>
        <dbReference type="ChEBI" id="CHEBI:15377"/>
        <dbReference type="ChEBI" id="CHEBI:58521"/>
        <dbReference type="ChEBI" id="CHEBI:137480"/>
        <dbReference type="EC" id="4.2.1.17"/>
    </reaction>
</comment>
<comment type="catalytic activity">
    <reaction evidence="1">
        <text>a (3S)-3-hydroxyacyl-CoA + NAD(+) = a 3-oxoacyl-CoA + NADH + H(+)</text>
        <dbReference type="Rhea" id="RHEA:22432"/>
        <dbReference type="ChEBI" id="CHEBI:15378"/>
        <dbReference type="ChEBI" id="CHEBI:57318"/>
        <dbReference type="ChEBI" id="CHEBI:57540"/>
        <dbReference type="ChEBI" id="CHEBI:57945"/>
        <dbReference type="ChEBI" id="CHEBI:90726"/>
        <dbReference type="EC" id="1.1.1.35"/>
    </reaction>
</comment>
<comment type="catalytic activity">
    <reaction evidence="1">
        <text>(3S)-3-hydroxybutanoyl-CoA = (3R)-3-hydroxybutanoyl-CoA</text>
        <dbReference type="Rhea" id="RHEA:21760"/>
        <dbReference type="ChEBI" id="CHEBI:57315"/>
        <dbReference type="ChEBI" id="CHEBI:57316"/>
        <dbReference type="EC" id="5.1.2.3"/>
    </reaction>
</comment>
<comment type="pathway">
    <text evidence="1">Lipid metabolism; fatty acid beta-oxidation.</text>
</comment>
<comment type="subunit">
    <text evidence="1">Heterotetramer of two alpha chains (FadJ) and two beta chains (FadI).</text>
</comment>
<comment type="subcellular location">
    <subcellularLocation>
        <location evidence="1">Cytoplasm</location>
    </subcellularLocation>
</comment>
<comment type="similarity">
    <text evidence="1">In the N-terminal section; belongs to the enoyl-CoA hydratase/isomerase family.</text>
</comment>
<comment type="similarity">
    <text evidence="1">In the central section; belongs to the 3-hydroxyacyl-CoA dehydrogenase family.</text>
</comment>